<evidence type="ECO:0000250" key="1"/>
<evidence type="ECO:0000269" key="2">
    <source>
    </source>
</evidence>
<evidence type="ECO:0000305" key="3"/>
<evidence type="ECO:0007829" key="4">
    <source>
        <dbReference type="PDB" id="2ICS"/>
    </source>
</evidence>
<proteinExistence type="evidence at protein level"/>
<gene>
    <name type="ordered locus">EF_0837</name>
    <name type="ORF">I574_01240</name>
    <name type="ORF">OO5_02741</name>
</gene>
<accession>Q837K0</accession>
<reference key="1">
    <citation type="journal article" date="2003" name="Science">
        <title>Role of mobile DNA in the evolution of vancomycin-resistant Enterococcus faecalis.</title>
        <authorList>
            <person name="Paulsen I.T."/>
            <person name="Banerjei L."/>
            <person name="Myers G.S.A."/>
            <person name="Nelson K.E."/>
            <person name="Seshadri R."/>
            <person name="Read T.D."/>
            <person name="Fouts D.E."/>
            <person name="Eisen J.A."/>
            <person name="Gill S.R."/>
            <person name="Heidelberg J.F."/>
            <person name="Tettelin H."/>
            <person name="Dodson R.J."/>
            <person name="Umayam L.A."/>
            <person name="Brinkac L.M."/>
            <person name="Beanan M.J."/>
            <person name="Daugherty S.C."/>
            <person name="DeBoy R.T."/>
            <person name="Durkin S.A."/>
            <person name="Kolonay J.F."/>
            <person name="Madupu R."/>
            <person name="Nelson W.C."/>
            <person name="Vamathevan J.J."/>
            <person name="Tran B."/>
            <person name="Upton J."/>
            <person name="Hansen T."/>
            <person name="Shetty J."/>
            <person name="Khouri H.M."/>
            <person name="Utterback T.R."/>
            <person name="Radune D."/>
            <person name="Ketchum K.A."/>
            <person name="Dougherty B.A."/>
            <person name="Fraser C.M."/>
        </authorList>
    </citation>
    <scope>NUCLEOTIDE SEQUENCE [LARGE SCALE GENOMIC DNA]</scope>
    <source>
        <strain>ATCC 700802 / V583</strain>
    </source>
</reference>
<reference key="2">
    <citation type="submission" date="2013-03" db="EMBL/GenBank/DDBJ databases">
        <title>The genome sequence of Enterococcus faecalis V583 (Illumina only assembly).</title>
        <authorList>
            <consortium name="The Broad Institute Genomics Platform"/>
            <consortium name="The Broad Institute Genome Sequencing Center for Infectious Disease"/>
            <person name="Earl A."/>
            <person name="Russ C."/>
            <person name="Gilmore M."/>
            <person name="Surin D."/>
            <person name="Walker B."/>
            <person name="Young S."/>
            <person name="Zeng Q."/>
            <person name="Gargeya S."/>
            <person name="Fitzgerald M."/>
            <person name="Haas B."/>
            <person name="Abouelleil A."/>
            <person name="Allen A.W."/>
            <person name="Alvarado L."/>
            <person name="Arachchi H.M."/>
            <person name="Berlin A.M."/>
            <person name="Chapman S.B."/>
            <person name="Gainer-Dewar J."/>
            <person name="Goldberg J."/>
            <person name="Griggs A."/>
            <person name="Gujja S."/>
            <person name="Hansen M."/>
            <person name="Howarth C."/>
            <person name="Imamovic A."/>
            <person name="Ireland A."/>
            <person name="Larimer J."/>
            <person name="McCowan C."/>
            <person name="Murphy C."/>
            <person name="Pearson M."/>
            <person name="Poon T.W."/>
            <person name="Priest M."/>
            <person name="Roberts A."/>
            <person name="Saif S."/>
            <person name="Shea T."/>
            <person name="Sisk P."/>
            <person name="Sykes S."/>
            <person name="Wortman J."/>
            <person name="Nusbaum C."/>
            <person name="Birren B."/>
        </authorList>
    </citation>
    <scope>NUCLEOTIDE SEQUENCE [LARGE SCALE GENOMIC DNA]</scope>
    <source>
        <strain>ATCC 700802 / V583</strain>
    </source>
</reference>
<reference key="3">
    <citation type="submission" date="2013-03" db="EMBL/GenBank/DDBJ databases">
        <title>The genome sequence of Enterococcus faecalis V583 (PacBio/Illumina hybrid assembly).</title>
        <authorList>
            <consortium name="The Broad Institute Genomics Platform"/>
            <consortium name="The Broad Institute Genome Sequencing Center for Infectious Disease"/>
            <person name="Earl A."/>
            <person name="Russ C."/>
            <person name="Gilmore M."/>
            <person name="Surin D."/>
            <person name="Walker B."/>
            <person name="Young S."/>
            <person name="Zeng Q."/>
            <person name="Gargeya S."/>
            <person name="Fitzgerald M."/>
            <person name="Haas B."/>
            <person name="Abouelleil A."/>
            <person name="Allen A.W."/>
            <person name="Alvarado L."/>
            <person name="Arachchi H.M."/>
            <person name="Berlin A.M."/>
            <person name="Chapman S.B."/>
            <person name="Gainer-Dewar J."/>
            <person name="Goldberg J."/>
            <person name="Griggs A."/>
            <person name="Gujja S."/>
            <person name="Hansen M."/>
            <person name="Howarth C."/>
            <person name="Imamovic A."/>
            <person name="Ireland A."/>
            <person name="Larimer J."/>
            <person name="McCowan C."/>
            <person name="Murphy C."/>
            <person name="Pearson M."/>
            <person name="Poon T.W."/>
            <person name="Priest M."/>
            <person name="Roberts A."/>
            <person name="Saif S."/>
            <person name="Shea T."/>
            <person name="Sisk P."/>
            <person name="Sykes S."/>
            <person name="Wortman J."/>
            <person name="Nusbaum C."/>
            <person name="Birren B."/>
        </authorList>
    </citation>
    <scope>NUCLEOTIDE SEQUENCE [LARGE SCALE GENOMIC DNA]</scope>
    <source>
        <strain>ATCC 700802 / V583</strain>
    </source>
</reference>
<reference key="4">
    <citation type="journal article" date="2013" name="Biochemistry">
        <title>Functional annotation and three-dimensional structure of an incorrectly annotated dihydroorotase from cog3964 in the amidohydrolase superfamily.</title>
        <authorList>
            <person name="Ornelas A."/>
            <person name="Korczynska M."/>
            <person name="Ragumani S."/>
            <person name="Kumaran D."/>
            <person name="Narindoshvili T."/>
            <person name="Shoichet B.K."/>
            <person name="Swaminathan S."/>
            <person name="Raushel F.M."/>
        </authorList>
    </citation>
    <scope>X-RAY CRYSTALLOGRAPHY (2.30 ANGSTROMS) IN COMPLEX WITH ZINC</scope>
    <scope>CARBOXYLATION AT LYS-152</scope>
    <scope>COFACTOR</scope>
    <scope>FUNCTION</scope>
</reference>
<organism>
    <name type="scientific">Enterococcus faecalis (strain ATCC 700802 / V583)</name>
    <dbReference type="NCBI Taxonomy" id="226185"/>
    <lineage>
        <taxon>Bacteria</taxon>
        <taxon>Bacillati</taxon>
        <taxon>Bacillota</taxon>
        <taxon>Bacilli</taxon>
        <taxon>Lactobacillales</taxon>
        <taxon>Enterococcaceae</taxon>
        <taxon>Enterococcus</taxon>
    </lineage>
</organism>
<protein>
    <recommendedName>
        <fullName>Deacetylase EF_0837</fullName>
        <ecNumber>3.1.1.-</ecNumber>
    </recommendedName>
</protein>
<dbReference type="EC" id="3.1.1.-"/>
<dbReference type="EMBL" id="AE016830">
    <property type="protein sequence ID" value="AAO80649.1"/>
    <property type="molecule type" value="Genomic_DNA"/>
</dbReference>
<dbReference type="EMBL" id="AHYN01000012">
    <property type="protein sequence ID" value="EOT48502.1"/>
    <property type="molecule type" value="Genomic_DNA"/>
</dbReference>
<dbReference type="EMBL" id="ASWP01000005">
    <property type="protein sequence ID" value="EOT88122.1"/>
    <property type="molecule type" value="Genomic_DNA"/>
</dbReference>
<dbReference type="RefSeq" id="NP_814579.1">
    <property type="nucleotide sequence ID" value="NC_004668.1"/>
</dbReference>
<dbReference type="RefSeq" id="WP_010774176.1">
    <property type="nucleotide sequence ID" value="NZ_KE136527.1"/>
</dbReference>
<dbReference type="PDB" id="2ICS">
    <property type="method" value="X-ray"/>
    <property type="resolution" value="2.30 A"/>
    <property type="chains" value="A=2-369"/>
</dbReference>
<dbReference type="PDBsum" id="2ICS"/>
<dbReference type="SMR" id="Q837K0"/>
<dbReference type="STRING" id="226185.EF_0837"/>
<dbReference type="EnsemblBacteria" id="AAO80649">
    <property type="protein sequence ID" value="AAO80649"/>
    <property type="gene ID" value="EF_0837"/>
</dbReference>
<dbReference type="KEGG" id="efa:EF0837"/>
<dbReference type="PATRIC" id="fig|226185.45.peg.2771"/>
<dbReference type="eggNOG" id="COG3964">
    <property type="taxonomic scope" value="Bacteria"/>
</dbReference>
<dbReference type="HOGENOM" id="CLU_036699_1_0_9"/>
<dbReference type="EvolutionaryTrace" id="Q837K0"/>
<dbReference type="Proteomes" id="UP000001415">
    <property type="component" value="Chromosome"/>
</dbReference>
<dbReference type="GO" id="GO:0019213">
    <property type="term" value="F:deacetylase activity"/>
    <property type="evidence" value="ECO:0007669"/>
    <property type="project" value="InterPro"/>
</dbReference>
<dbReference type="GO" id="GO:0016810">
    <property type="term" value="F:hydrolase activity, acting on carbon-nitrogen (but not peptide) bonds"/>
    <property type="evidence" value="ECO:0007669"/>
    <property type="project" value="InterPro"/>
</dbReference>
<dbReference type="GO" id="GO:0046872">
    <property type="term" value="F:metal ion binding"/>
    <property type="evidence" value="ECO:0007669"/>
    <property type="project" value="UniProtKB-KW"/>
</dbReference>
<dbReference type="Gene3D" id="3.20.20.140">
    <property type="entry name" value="Metal-dependent hydrolases"/>
    <property type="match status" value="1"/>
</dbReference>
<dbReference type="Gene3D" id="2.30.40.10">
    <property type="entry name" value="Urease, subunit C, domain 1"/>
    <property type="match status" value="1"/>
</dbReference>
<dbReference type="InterPro" id="IPR020043">
    <property type="entry name" value="Deacetylase_Atu3266-like"/>
</dbReference>
<dbReference type="InterPro" id="IPR047601">
    <property type="entry name" value="EF_0837-like"/>
</dbReference>
<dbReference type="InterPro" id="IPR011059">
    <property type="entry name" value="Metal-dep_hydrolase_composite"/>
</dbReference>
<dbReference type="InterPro" id="IPR032466">
    <property type="entry name" value="Metal_Hydrolase"/>
</dbReference>
<dbReference type="NCBIfam" id="TIGR03583">
    <property type="entry name" value="EF_0837"/>
    <property type="match status" value="1"/>
</dbReference>
<dbReference type="NCBIfam" id="NF006689">
    <property type="entry name" value="PRK09237.1"/>
    <property type="match status" value="1"/>
</dbReference>
<dbReference type="PANTHER" id="PTHR42717">
    <property type="entry name" value="DIHYDROOROTASE-RELATED"/>
    <property type="match status" value="1"/>
</dbReference>
<dbReference type="PANTHER" id="PTHR42717:SF1">
    <property type="entry name" value="IMIDAZOLONEPROPIONASE AND RELATED AMIDOHYDROLASES"/>
    <property type="match status" value="1"/>
</dbReference>
<dbReference type="Pfam" id="PF22647">
    <property type="entry name" value="EF_0837-like_N"/>
    <property type="match status" value="1"/>
</dbReference>
<dbReference type="PIRSF" id="PIRSF039004">
    <property type="entry name" value="ADE_EF_0837"/>
    <property type="match status" value="1"/>
</dbReference>
<dbReference type="SUPFAM" id="SSF51338">
    <property type="entry name" value="Composite domain of metallo-dependent hydrolases"/>
    <property type="match status" value="1"/>
</dbReference>
<dbReference type="SUPFAM" id="SSF51556">
    <property type="entry name" value="Metallo-dependent hydrolases"/>
    <property type="match status" value="1"/>
</dbReference>
<keyword id="KW-0002">3D-structure</keyword>
<keyword id="KW-0378">Hydrolase</keyword>
<keyword id="KW-0479">Metal-binding</keyword>
<keyword id="KW-1185">Reference proteome</keyword>
<keyword id="KW-0862">Zinc</keyword>
<comment type="function">
    <text evidence="2">Esterase that can catalyze the deacetylation of acetyl-(R)-mandelate, but with very low efficiency (in vitro).</text>
</comment>
<comment type="cofactor">
    <cofactor evidence="2">
        <name>Zn(2+)</name>
        <dbReference type="ChEBI" id="CHEBI:29105"/>
    </cofactor>
    <text evidence="2">Binds 2 Zn(2+) ions per subunit.</text>
</comment>
<comment type="similarity">
    <text evidence="3">Belongs to the metallo-dependent hydrolases superfamily. Atu3266/EF_0837 deacetylase family.</text>
</comment>
<sequence length="369" mass="40658">MDYDLLIKNGQTVNGMPVEIAIKEKKIAAVAATISGSAKETIHLEPGTYVSAGWIDDHVHCFEKMALYYDYPDEIGVKKGVTTVIDAGTTGAENIHEFYDLAQQAKTNVFGLVNISKWGIVAQDELADLSKVQASLVKKAIQELPDFVVGIKARMSRTVIGDNGITPLELAKQIQQENQEIPLMVHIGSAPPHLDEILALMEKGDVLTHCFNGKENGILDQATDKIKDFAWQAYNKGVVFDIGHGTDSFNFHVAETALREGMKAASISTDIYIRNRENGPVYDLATTMEKLRVVGYDWPEIIEKVTKAPAENFHLTQKGTLEIGKDADLTIFTIQAEEKTLTDSNGLTRVAKEQIRPIKTIIGGQIYDN</sequence>
<name>DEACT_ENTFA</name>
<feature type="chain" id="PRO_0000429021" description="Deacetylase EF_0837">
    <location>
        <begin position="1"/>
        <end position="369"/>
    </location>
</feature>
<feature type="binding site" evidence="2">
    <location>
        <position position="58"/>
    </location>
    <ligand>
        <name>Zn(2+)</name>
        <dbReference type="ChEBI" id="CHEBI:29105"/>
        <label>1</label>
    </ligand>
</feature>
<feature type="binding site" evidence="2">
    <location>
        <position position="60"/>
    </location>
    <ligand>
        <name>Zn(2+)</name>
        <dbReference type="ChEBI" id="CHEBI:29105"/>
        <label>1</label>
    </ligand>
</feature>
<feature type="binding site" description="via carbamate group" evidence="2">
    <location>
        <position position="152"/>
    </location>
    <ligand>
        <name>Zn(2+)</name>
        <dbReference type="ChEBI" id="CHEBI:29105"/>
        <label>1</label>
    </ligand>
</feature>
<feature type="binding site" description="via carbamate group" evidence="2">
    <location>
        <position position="152"/>
    </location>
    <ligand>
        <name>Zn(2+)</name>
        <dbReference type="ChEBI" id="CHEBI:29105"/>
        <label>2</label>
    </ligand>
</feature>
<feature type="binding site" evidence="2">
    <location>
        <position position="186"/>
    </location>
    <ligand>
        <name>Zn(2+)</name>
        <dbReference type="ChEBI" id="CHEBI:29105"/>
        <label>2</label>
    </ligand>
</feature>
<feature type="binding site" evidence="2">
    <location>
        <position position="209"/>
    </location>
    <ligand>
        <name>Zn(2+)</name>
        <dbReference type="ChEBI" id="CHEBI:29105"/>
        <label>2</label>
    </ligand>
</feature>
<feature type="binding site" evidence="2">
    <location>
        <position position="270"/>
    </location>
    <ligand>
        <name>Zn(2+)</name>
        <dbReference type="ChEBI" id="CHEBI:29105"/>
        <label>1</label>
    </ligand>
</feature>
<feature type="site" description="Transition state stabilizer" evidence="1">
    <location>
        <position position="154"/>
    </location>
</feature>
<feature type="modified residue" description="N6-carboxylysine" evidence="2">
    <location>
        <position position="152"/>
    </location>
</feature>
<feature type="strand" evidence="4">
    <location>
        <begin position="3"/>
        <end position="11"/>
    </location>
</feature>
<feature type="strand" evidence="4">
    <location>
        <begin position="17"/>
        <end position="23"/>
    </location>
</feature>
<feature type="strand" evidence="4">
    <location>
        <begin position="26"/>
        <end position="32"/>
    </location>
</feature>
<feature type="strand" evidence="4">
    <location>
        <begin position="38"/>
        <end position="43"/>
    </location>
</feature>
<feature type="strand" evidence="4">
    <location>
        <begin position="49"/>
        <end position="52"/>
    </location>
</feature>
<feature type="strand" evidence="4">
    <location>
        <begin position="54"/>
        <end position="59"/>
    </location>
</feature>
<feature type="strand" evidence="4">
    <location>
        <begin position="65"/>
        <end position="68"/>
    </location>
</feature>
<feature type="helix" evidence="4">
    <location>
        <begin position="72"/>
        <end position="75"/>
    </location>
</feature>
<feature type="helix" evidence="4">
    <location>
        <begin position="77"/>
        <end position="79"/>
    </location>
</feature>
<feature type="strand" evidence="4">
    <location>
        <begin position="81"/>
        <end position="90"/>
    </location>
</feature>
<feature type="turn" evidence="4">
    <location>
        <begin position="92"/>
        <end position="94"/>
    </location>
</feature>
<feature type="helix" evidence="4">
    <location>
        <begin position="95"/>
        <end position="103"/>
    </location>
</feature>
<feature type="strand" evidence="4">
    <location>
        <begin position="105"/>
        <end position="116"/>
    </location>
</feature>
<feature type="turn" evidence="4">
    <location>
        <begin position="117"/>
        <end position="120"/>
    </location>
</feature>
<feature type="strand" evidence="4">
    <location>
        <begin position="121"/>
        <end position="123"/>
    </location>
</feature>
<feature type="helix" evidence="4">
    <location>
        <begin position="129"/>
        <end position="131"/>
    </location>
</feature>
<feature type="helix" evidence="4">
    <location>
        <begin position="134"/>
        <end position="143"/>
    </location>
</feature>
<feature type="turn" evidence="4">
    <location>
        <begin position="145"/>
        <end position="147"/>
    </location>
</feature>
<feature type="strand" evidence="4">
    <location>
        <begin position="148"/>
        <end position="156"/>
    </location>
</feature>
<feature type="helix" evidence="4">
    <location>
        <begin position="157"/>
        <end position="160"/>
    </location>
</feature>
<feature type="helix" evidence="4">
    <location>
        <begin position="166"/>
        <end position="176"/>
    </location>
</feature>
<feature type="turn" evidence="4">
    <location>
        <begin position="177"/>
        <end position="180"/>
    </location>
</feature>
<feature type="strand" evidence="4">
    <location>
        <begin position="183"/>
        <end position="187"/>
    </location>
</feature>
<feature type="strand" evidence="4">
    <location>
        <begin position="189"/>
        <end position="192"/>
    </location>
</feature>
<feature type="helix" evidence="4">
    <location>
        <begin position="194"/>
        <end position="200"/>
    </location>
</feature>
<feature type="strand" evidence="4">
    <location>
        <begin position="206"/>
        <end position="209"/>
    </location>
</feature>
<feature type="strand" evidence="4">
    <location>
        <begin position="217"/>
        <end position="220"/>
    </location>
</feature>
<feature type="turn" evidence="4">
    <location>
        <begin position="221"/>
        <end position="224"/>
    </location>
</feature>
<feature type="helix" evidence="4">
    <location>
        <begin position="228"/>
        <end position="235"/>
    </location>
</feature>
<feature type="strand" evidence="4">
    <location>
        <begin position="239"/>
        <end position="241"/>
    </location>
</feature>
<feature type="turn" evidence="4">
    <location>
        <begin position="245"/>
        <end position="247"/>
    </location>
</feature>
<feature type="helix" evidence="4">
    <location>
        <begin position="251"/>
        <end position="259"/>
    </location>
</feature>
<feature type="helix" evidence="4">
    <location>
        <begin position="273"/>
        <end position="277"/>
    </location>
</feature>
<feature type="strand" evidence="4">
    <location>
        <begin position="278"/>
        <end position="280"/>
    </location>
</feature>
<feature type="helix" evidence="4">
    <location>
        <begin position="284"/>
        <end position="294"/>
    </location>
</feature>
<feature type="helix" evidence="4">
    <location>
        <begin position="298"/>
        <end position="303"/>
    </location>
</feature>
<feature type="turn" evidence="4">
    <location>
        <begin position="304"/>
        <end position="306"/>
    </location>
</feature>
<feature type="helix" evidence="4">
    <location>
        <begin position="307"/>
        <end position="312"/>
    </location>
</feature>
<feature type="strand" evidence="4">
    <location>
        <begin position="318"/>
        <end position="320"/>
    </location>
</feature>
<feature type="strand" evidence="4">
    <location>
        <begin position="329"/>
        <end position="342"/>
    </location>
</feature>
<feature type="strand" evidence="4">
    <location>
        <begin position="348"/>
        <end position="362"/>
    </location>
</feature>
<feature type="strand" evidence="4">
    <location>
        <begin position="365"/>
        <end position="368"/>
    </location>
</feature>